<reference key="1">
    <citation type="journal article" date="2003" name="Genome Res.">
        <title>The secreted protein discovery initiative (SPDI), a large-scale effort to identify novel human secreted and transmembrane proteins: a bioinformatics assessment.</title>
        <authorList>
            <person name="Clark H.F."/>
            <person name="Gurney A.L."/>
            <person name="Abaya E."/>
            <person name="Baker K."/>
            <person name="Baldwin D.T."/>
            <person name="Brush J."/>
            <person name="Chen J."/>
            <person name="Chow B."/>
            <person name="Chui C."/>
            <person name="Crowley C."/>
            <person name="Currell B."/>
            <person name="Deuel B."/>
            <person name="Dowd P."/>
            <person name="Eaton D."/>
            <person name="Foster J.S."/>
            <person name="Grimaldi C."/>
            <person name="Gu Q."/>
            <person name="Hass P.E."/>
            <person name="Heldens S."/>
            <person name="Huang A."/>
            <person name="Kim H.S."/>
            <person name="Klimowski L."/>
            <person name="Jin Y."/>
            <person name="Johnson S."/>
            <person name="Lee J."/>
            <person name="Lewis L."/>
            <person name="Liao D."/>
            <person name="Mark M.R."/>
            <person name="Robbie E."/>
            <person name="Sanchez C."/>
            <person name="Schoenfeld J."/>
            <person name="Seshagiri S."/>
            <person name="Simmons L."/>
            <person name="Singh J."/>
            <person name="Smith V."/>
            <person name="Stinson J."/>
            <person name="Vagts A."/>
            <person name="Vandlen R.L."/>
            <person name="Watanabe C."/>
            <person name="Wieand D."/>
            <person name="Woods K."/>
            <person name="Xie M.-H."/>
            <person name="Yansura D.G."/>
            <person name="Yi S."/>
            <person name="Yu G."/>
            <person name="Yuan J."/>
            <person name="Zhang M."/>
            <person name="Zhang Z."/>
            <person name="Goddard A.D."/>
            <person name="Wood W.I."/>
            <person name="Godowski P.J."/>
            <person name="Gray A.M."/>
        </authorList>
    </citation>
    <scope>NUCLEOTIDE SEQUENCE [LARGE SCALE MRNA] (ISOFORM 3)</scope>
</reference>
<reference key="2">
    <citation type="journal article" date="2004" name="Genome Res.">
        <title>The status, quality, and expansion of the NIH full-length cDNA project: the Mammalian Gene Collection (MGC).</title>
        <authorList>
            <consortium name="The MGC Project Team"/>
        </authorList>
    </citation>
    <scope>NUCLEOTIDE SEQUENCE [LARGE SCALE MRNA] (ISOFORM 1)</scope>
    <source>
        <tissue>Testis</tissue>
    </source>
</reference>
<reference key="3">
    <citation type="submission" date="2003-03" db="EMBL/GenBank/DDBJ databases">
        <title>A new spermatogenesis-related gene.</title>
        <authorList>
            <person name="Hu T.H."/>
            <person name="Miao S.Y."/>
            <person name="Zhang X.D."/>
            <person name="Qiao Y."/>
            <person name="Liang G."/>
            <person name="Wang L.F."/>
        </authorList>
    </citation>
    <scope>NUCLEOTIDE SEQUENCE [LARGE SCALE MRNA] OF 7-345 (ISOFORM 2)</scope>
    <source>
        <tissue>Testis</tissue>
    </source>
</reference>
<reference key="4">
    <citation type="journal article" date="2007" name="Gene Expr. Patterns">
        <title>Fank1 is a testis-specific gene encoding a nuclear protein exclusively expressed during the transition from the meiotic to the haploid phase of spermatogenesis.</title>
        <authorList>
            <person name="Zheng Z."/>
            <person name="Zheng H."/>
            <person name="Yan W."/>
        </authorList>
    </citation>
    <scope>TISSUE SPECIFICITY</scope>
</reference>
<reference key="5">
    <citation type="journal article" date="2011" name="Cell. Mol. Life Sci.">
        <title>Fank1 interacts with Jab1 and regulates cell apoptosis via the AP-1 pathway.</title>
        <authorList>
            <person name="Wang H."/>
            <person name="Song W."/>
            <person name="Hu T."/>
            <person name="Zhang N."/>
            <person name="Miao S."/>
            <person name="Zong S."/>
            <person name="Wang L."/>
        </authorList>
    </citation>
    <scope>FUNCTION</scope>
    <scope>INTERACTION WITH COPS5</scope>
    <scope>SUBCELLULAR LOCATION</scope>
    <scope>DOMAIN</scope>
</reference>
<reference key="6">
    <citation type="journal article" date="2016" name="Cell. Signal.">
        <title>Proapoptotic RYBP interacts with FANK1 and induces tumor cell apoptosis through the AP-1 signaling pathway.</title>
        <authorList>
            <person name="Ma W."/>
            <person name="Zhang X."/>
            <person name="Li M."/>
            <person name="Ma X."/>
            <person name="Huang B."/>
            <person name="Chen H."/>
            <person name="Chen D."/>
        </authorList>
    </citation>
    <scope>FUNCTION</scope>
    <scope>INTERACTION WITH RYBP</scope>
    <scope>SUBCELLULAR LOCATION</scope>
    <scope>DOMAIN</scope>
    <scope>UBIQUITINATION</scope>
</reference>
<gene>
    <name evidence="11" type="primary">FANK1</name>
    <name evidence="9" type="ORF">HSD13</name>
    <name evidence="10" type="ORF">UNQ6504/PRO21382</name>
</gene>
<comment type="function">
    <text evidence="4 5">Through the activation of JUN and AP-1-mediated transcription, may regulate apoptosis.</text>
</comment>
<comment type="subunit">
    <text evidence="4 5">Interacts with COPS5; regulates the phosphorylation of JUN and the transcriptional activity of AP-1 (PubMed:20978819). Interacts with RYBP; may prevent the ubiquitin-mediated proteasomal degradation of FANK1 (PubMed:27060496).</text>
</comment>
<comment type="interaction">
    <interactant intactId="EBI-21975404">
        <id>Q8TC84</id>
    </interactant>
    <interactant intactId="EBI-348399">
        <id>P22607</id>
        <label>FGFR3</label>
    </interactant>
    <organismsDiffer>false</organismsDiffer>
    <experiments>3</experiments>
</comment>
<comment type="interaction">
    <interactant intactId="EBI-21975404">
        <id>Q8TC84</id>
    </interactant>
    <interactant intactId="EBI-352682">
        <id>P04792</id>
        <label>HSPB1</label>
    </interactant>
    <organismsDiffer>false</organismsDiffer>
    <experiments>3</experiments>
</comment>
<comment type="interaction">
    <interactant intactId="EBI-21975404">
        <id>Q8TC84</id>
    </interactant>
    <interactant intactId="EBI-466029">
        <id>P42858</id>
        <label>HTT</label>
    </interactant>
    <organismsDiffer>false</organismsDiffer>
    <experiments>3</experiments>
</comment>
<comment type="interaction">
    <interactant intactId="EBI-21975404">
        <id>Q8TC84</id>
    </interactant>
    <interactant intactId="EBI-10975473">
        <id>O60333-2</id>
        <label>KIF1B</label>
    </interactant>
    <organismsDiffer>false</organismsDiffer>
    <experiments>3</experiments>
</comment>
<comment type="interaction">
    <interactant intactId="EBI-21975404">
        <id>Q8TC84</id>
    </interactant>
    <interactant intactId="EBI-475646">
        <id>P07196</id>
        <label>NEFL</label>
    </interactant>
    <organismsDiffer>false</organismsDiffer>
    <experiments>3</experiments>
</comment>
<comment type="interaction">
    <interactant intactId="EBI-21975404">
        <id>Q8TC84</id>
    </interactant>
    <interactant intactId="EBI-720609">
        <id>O76024</id>
        <label>WFS1</label>
    </interactant>
    <organismsDiffer>false</organismsDiffer>
    <experiments>3</experiments>
</comment>
<comment type="subcellular location">
    <subcellularLocation>
        <location evidence="4 5">Nucleus</location>
    </subcellularLocation>
    <subcellularLocation>
        <location evidence="4">Cytoplasm</location>
        <location evidence="4">Cytosol</location>
    </subcellularLocation>
    <subcellularLocation>
        <location evidence="1">Cytoplasm</location>
        <location evidence="1">Cytoskeleton</location>
        <location evidence="1">Cilium basal body</location>
    </subcellularLocation>
    <subcellularLocation>
        <location evidence="1">Cell projection</location>
        <location evidence="1">Cilium</location>
    </subcellularLocation>
</comment>
<comment type="alternative products">
    <event type="alternative splicing"/>
    <isoform>
        <id>Q8TC84-1</id>
        <name>1</name>
        <sequence type="displayed"/>
    </isoform>
    <isoform>
        <id>Q8TC84-2</id>
        <name>2</name>
        <sequence type="described" ref="VSP_013568"/>
    </isoform>
    <isoform>
        <id>Q8TC84-3</id>
        <name>3</name>
        <sequence type="described" ref="VSP_013569"/>
    </isoform>
</comment>
<comment type="tissue specificity">
    <text evidence="3">Mostly restricted to testis.</text>
</comment>
<comment type="domain">
    <text evidence="4 5">The fibronectin type-III domain mediates interaction with COPS5 and RYBP.</text>
</comment>
<comment type="PTM">
    <text evidence="5">Polyubiquitinated. Polyubiquitination leads to proteasomal degradation.</text>
</comment>
<proteinExistence type="evidence at protein level"/>
<keyword id="KW-0025">Alternative splicing</keyword>
<keyword id="KW-0040">ANK repeat</keyword>
<keyword id="KW-0966">Cell projection</keyword>
<keyword id="KW-0963">Cytoplasm</keyword>
<keyword id="KW-0206">Cytoskeleton</keyword>
<keyword id="KW-0539">Nucleus</keyword>
<keyword id="KW-1267">Proteomics identification</keyword>
<keyword id="KW-1185">Reference proteome</keyword>
<keyword id="KW-0677">Repeat</keyword>
<keyword id="KW-0832">Ubl conjugation</keyword>
<organism>
    <name type="scientific">Homo sapiens</name>
    <name type="common">Human</name>
    <dbReference type="NCBI Taxonomy" id="9606"/>
    <lineage>
        <taxon>Eukaryota</taxon>
        <taxon>Metazoa</taxon>
        <taxon>Chordata</taxon>
        <taxon>Craniata</taxon>
        <taxon>Vertebrata</taxon>
        <taxon>Euteleostomi</taxon>
        <taxon>Mammalia</taxon>
        <taxon>Eutheria</taxon>
        <taxon>Euarchontoglires</taxon>
        <taxon>Primates</taxon>
        <taxon>Haplorrhini</taxon>
        <taxon>Catarrhini</taxon>
        <taxon>Hominidae</taxon>
        <taxon>Homo</taxon>
    </lineage>
</organism>
<protein>
    <recommendedName>
        <fullName evidence="8">Fibronectin type 3 and ankyrin repeat domains protein 1</fullName>
    </recommendedName>
</protein>
<feature type="chain" id="PRO_0000066990" description="Fibronectin type 3 and ankyrin repeat domains protein 1">
    <location>
        <begin position="1"/>
        <end position="345"/>
    </location>
</feature>
<feature type="domain" description="Fibronectin type-III" evidence="2">
    <location>
        <begin position="8"/>
        <end position="108"/>
    </location>
</feature>
<feature type="repeat" description="ANK 1">
    <location>
        <begin position="109"/>
        <end position="139"/>
    </location>
</feature>
<feature type="repeat" description="ANK 2">
    <location>
        <begin position="143"/>
        <end position="172"/>
    </location>
</feature>
<feature type="repeat" description="ANK 3">
    <location>
        <begin position="176"/>
        <end position="205"/>
    </location>
</feature>
<feature type="repeat" description="ANK 4">
    <location>
        <begin position="209"/>
        <end position="238"/>
    </location>
</feature>
<feature type="repeat" description="ANK 5">
    <location>
        <begin position="243"/>
        <end position="273"/>
    </location>
</feature>
<feature type="repeat" description="ANK 6">
    <location>
        <begin position="277"/>
        <end position="306"/>
    </location>
</feature>
<feature type="splice variant" id="VSP_013569" description="In isoform 3." evidence="6">
    <original>R</original>
    <variation>RPSLSKSLVKIRMVTSVLHGPPTENTG</variation>
    <location>
        <position position="106"/>
    </location>
</feature>
<feature type="splice variant" id="VSP_013568" description="In isoform 2." evidence="7">
    <original>SVVSLLEERKKKQRPKKSCVC</original>
    <variation>VGMLFLPIKANF</variation>
    <location>
        <begin position="325"/>
        <end position="345"/>
    </location>
</feature>
<feature type="sequence variant" id="VAR_048296" description="In dbSNP:rs17153879.">
    <original>P</original>
    <variation>L</variation>
    <location>
        <position position="12"/>
    </location>
</feature>
<feature type="sequence variant" id="VAR_027896" description="In dbSNP:rs17153882.">
    <original>R</original>
    <variation>S</variation>
    <location>
        <position position="46"/>
    </location>
</feature>
<feature type="sequence variant" id="VAR_024176" description="In dbSNP:rs1666.">
    <original>L</original>
    <variation>V</variation>
    <location>
        <position position="329"/>
    </location>
</feature>
<feature type="sequence variant" id="VAR_048297" description="In dbSNP:rs17153976.">
    <original>C</original>
    <variation>F</variation>
    <location>
        <position position="343"/>
    </location>
</feature>
<feature type="sequence conflict" description="In Ref. 2; AAH24189." evidence="8" ref="2">
    <original>K</original>
    <variation>R</variation>
    <location>
        <position position="5"/>
    </location>
</feature>
<accession>Q8TC84</accession>
<accession>Q6UXY9</accession>
<accession>Q6X7T6</accession>
<sequence length="345" mass="38341">MEPQKIMPPSKPHPPVVGKVTHHSIELYWDLEKKAKRQGPQEQWFRFSIEEEDPKMHTYGIIYTGYATKHVVEGLEPRTLYRFRLKVTSPSGECEYSPLVSVSTTREPISSEHLHRAVSVNDEDLLVRILQGGRVKVDVPNKFGFTALMVAAQKGYTRLVKILVSNGTDVNLKNGSGKDSLMLACYAGHLDVVKYLRRHGASWQARDLGGCTALHWAADGGHCSVIEWMIKDGCEVDVVDTGSGWTPLMRVSAVSGNQRVASLLIDAGANVNVKDRNGKTPLMVAVLNNHEELVQLLLDKGADASVKNEFGKGVLEMARVFDRQSVVSLLEERKKKQRPKKSCVC</sequence>
<dbReference type="EMBL" id="AY358154">
    <property type="protein sequence ID" value="AAQ88521.1"/>
    <property type="molecule type" value="mRNA"/>
</dbReference>
<dbReference type="EMBL" id="BC024189">
    <property type="protein sequence ID" value="AAH24189.2"/>
    <property type="molecule type" value="mRNA"/>
</dbReference>
<dbReference type="EMBL" id="AY251163">
    <property type="protein sequence ID" value="AAP20060.1"/>
    <property type="molecule type" value="mRNA"/>
</dbReference>
<dbReference type="CCDS" id="CCDS31309.1">
    <molecule id="Q8TC84-1"/>
</dbReference>
<dbReference type="RefSeq" id="NP_001337868.1">
    <molecule id="Q8TC84-3"/>
    <property type="nucleotide sequence ID" value="NM_001350939.2"/>
</dbReference>
<dbReference type="RefSeq" id="NP_660278.3">
    <molecule id="Q8TC84-1"/>
    <property type="nucleotide sequence ID" value="NM_145235.3"/>
</dbReference>
<dbReference type="RefSeq" id="XP_011538652.1">
    <property type="nucleotide sequence ID" value="XM_011540350.2"/>
</dbReference>
<dbReference type="SMR" id="Q8TC84"/>
<dbReference type="BioGRID" id="124956">
    <property type="interactions" value="11"/>
</dbReference>
<dbReference type="FunCoup" id="Q8TC84">
    <property type="interactions" value="531"/>
</dbReference>
<dbReference type="IntAct" id="Q8TC84">
    <property type="interactions" value="14"/>
</dbReference>
<dbReference type="STRING" id="9606.ENSP00000357682"/>
<dbReference type="GlyGen" id="Q8TC84">
    <property type="glycosylation" value="1 site, 1 O-linked glycan (1 site)"/>
</dbReference>
<dbReference type="iPTMnet" id="Q8TC84"/>
<dbReference type="PhosphoSitePlus" id="Q8TC84"/>
<dbReference type="BioMuta" id="FANK1"/>
<dbReference type="DMDM" id="116241361"/>
<dbReference type="MassIVE" id="Q8TC84"/>
<dbReference type="PaxDb" id="9606-ENSP00000357682"/>
<dbReference type="PeptideAtlas" id="Q8TC84"/>
<dbReference type="ProteomicsDB" id="74098">
    <molecule id="Q8TC84-1"/>
</dbReference>
<dbReference type="ProteomicsDB" id="74099">
    <molecule id="Q8TC84-2"/>
</dbReference>
<dbReference type="ProteomicsDB" id="74100">
    <molecule id="Q8TC84-3"/>
</dbReference>
<dbReference type="Antibodypedia" id="48696">
    <property type="antibodies" value="92 antibodies from 17 providers"/>
</dbReference>
<dbReference type="DNASU" id="92565"/>
<dbReference type="Ensembl" id="ENST00000368693.6">
    <molecule id="Q8TC84-1"/>
    <property type="protein sequence ID" value="ENSP00000357682.1"/>
    <property type="gene ID" value="ENSG00000203780.12"/>
</dbReference>
<dbReference type="GeneID" id="92565"/>
<dbReference type="KEGG" id="hsa:92565"/>
<dbReference type="MANE-Select" id="ENST00000368693.6">
    <property type="protein sequence ID" value="ENSP00000357682.1"/>
    <property type="RefSeq nucleotide sequence ID" value="NM_145235.5"/>
    <property type="RefSeq protein sequence ID" value="NP_660278.3"/>
</dbReference>
<dbReference type="UCSC" id="uc001ljh.5">
    <molecule id="Q8TC84-1"/>
    <property type="organism name" value="human"/>
</dbReference>
<dbReference type="AGR" id="HGNC:23527"/>
<dbReference type="CTD" id="92565"/>
<dbReference type="DisGeNET" id="92565"/>
<dbReference type="GeneCards" id="FANK1"/>
<dbReference type="HGNC" id="HGNC:23527">
    <property type="gene designation" value="FANK1"/>
</dbReference>
<dbReference type="HPA" id="ENSG00000203780">
    <property type="expression patterns" value="Tissue enhanced (choroid plexus, fallopian tube, testis)"/>
</dbReference>
<dbReference type="MIM" id="611640">
    <property type="type" value="gene"/>
</dbReference>
<dbReference type="neXtProt" id="NX_Q8TC84"/>
<dbReference type="OpenTargets" id="ENSG00000203780"/>
<dbReference type="PharmGKB" id="PA134976727"/>
<dbReference type="VEuPathDB" id="HostDB:ENSG00000203780"/>
<dbReference type="eggNOG" id="KOG0504">
    <property type="taxonomic scope" value="Eukaryota"/>
</dbReference>
<dbReference type="GeneTree" id="ENSGT00940000160878"/>
<dbReference type="InParanoid" id="Q8TC84"/>
<dbReference type="OMA" id="NFGHRLR"/>
<dbReference type="OrthoDB" id="9995210at2759"/>
<dbReference type="PAN-GO" id="Q8TC84">
    <property type="GO annotations" value="3 GO annotations based on evolutionary models"/>
</dbReference>
<dbReference type="PhylomeDB" id="Q8TC84"/>
<dbReference type="TreeFam" id="TF106234"/>
<dbReference type="PathwayCommons" id="Q8TC84"/>
<dbReference type="SignaLink" id="Q8TC84"/>
<dbReference type="BioGRID-ORCS" id="92565">
    <property type="hits" value="13 hits in 1125 CRISPR screens"/>
</dbReference>
<dbReference type="ChiTaRS" id="FANK1">
    <property type="organism name" value="human"/>
</dbReference>
<dbReference type="GenomeRNAi" id="92565"/>
<dbReference type="Pharos" id="Q8TC84">
    <property type="development level" value="Tbio"/>
</dbReference>
<dbReference type="PRO" id="PR:Q8TC84"/>
<dbReference type="Proteomes" id="UP000005640">
    <property type="component" value="Chromosome 10"/>
</dbReference>
<dbReference type="RNAct" id="Q8TC84">
    <property type="molecule type" value="protein"/>
</dbReference>
<dbReference type="Bgee" id="ENSG00000203780">
    <property type="expression patterns" value="Expressed in right uterine tube and 133 other cell types or tissues"/>
</dbReference>
<dbReference type="ExpressionAtlas" id="Q8TC84">
    <property type="expression patterns" value="baseline and differential"/>
</dbReference>
<dbReference type="GO" id="GO:0000785">
    <property type="term" value="C:chromatin"/>
    <property type="evidence" value="ECO:0000314"/>
    <property type="project" value="UniProtKB"/>
</dbReference>
<dbReference type="GO" id="GO:0036064">
    <property type="term" value="C:ciliary basal body"/>
    <property type="evidence" value="ECO:0000250"/>
    <property type="project" value="UniProtKB"/>
</dbReference>
<dbReference type="GO" id="GO:0097546">
    <property type="term" value="C:ciliary base"/>
    <property type="evidence" value="ECO:0007669"/>
    <property type="project" value="Ensembl"/>
</dbReference>
<dbReference type="GO" id="GO:0005929">
    <property type="term" value="C:cilium"/>
    <property type="evidence" value="ECO:0000250"/>
    <property type="project" value="UniProtKB"/>
</dbReference>
<dbReference type="GO" id="GO:0005737">
    <property type="term" value="C:cytoplasm"/>
    <property type="evidence" value="ECO:0000314"/>
    <property type="project" value="UniProtKB"/>
</dbReference>
<dbReference type="GO" id="GO:0005829">
    <property type="term" value="C:cytosol"/>
    <property type="evidence" value="ECO:0000314"/>
    <property type="project" value="UniProtKB"/>
</dbReference>
<dbReference type="GO" id="GO:0005654">
    <property type="term" value="C:nucleoplasm"/>
    <property type="evidence" value="ECO:0000314"/>
    <property type="project" value="HPA"/>
</dbReference>
<dbReference type="GO" id="GO:0005634">
    <property type="term" value="C:nucleus"/>
    <property type="evidence" value="ECO:0000314"/>
    <property type="project" value="UniProtKB"/>
</dbReference>
<dbReference type="GO" id="GO:0043066">
    <property type="term" value="P:negative regulation of apoptotic process"/>
    <property type="evidence" value="ECO:0000315"/>
    <property type="project" value="UniProtKB"/>
</dbReference>
<dbReference type="GO" id="GO:0043065">
    <property type="term" value="P:positive regulation of apoptotic process"/>
    <property type="evidence" value="ECO:0000315"/>
    <property type="project" value="UniProtKB"/>
</dbReference>
<dbReference type="GO" id="GO:0051091">
    <property type="term" value="P:positive regulation of DNA-binding transcription factor activity"/>
    <property type="evidence" value="ECO:0000315"/>
    <property type="project" value="UniProtKB"/>
</dbReference>
<dbReference type="GO" id="GO:0045893">
    <property type="term" value="P:positive regulation of DNA-templated transcription"/>
    <property type="evidence" value="ECO:0000315"/>
    <property type="project" value="UniProtKB"/>
</dbReference>
<dbReference type="CDD" id="cd00063">
    <property type="entry name" value="FN3"/>
    <property type="match status" value="1"/>
</dbReference>
<dbReference type="FunFam" id="1.25.40.20:FF:000129">
    <property type="entry name" value="Fibronectin type 3 and ankyrin repeat domains 1 protein"/>
    <property type="match status" value="1"/>
</dbReference>
<dbReference type="FunFam" id="1.25.40.20:FF:000218">
    <property type="entry name" value="Fibronectin type 3 and ankyrin repeat domains protein 1"/>
    <property type="match status" value="1"/>
</dbReference>
<dbReference type="FunFam" id="2.60.40.10:FF:000598">
    <property type="entry name" value="Fibronectin type 3 and ankyrin repeat domains protein 1"/>
    <property type="match status" value="1"/>
</dbReference>
<dbReference type="Gene3D" id="1.25.40.20">
    <property type="entry name" value="Ankyrin repeat-containing domain"/>
    <property type="match status" value="2"/>
</dbReference>
<dbReference type="Gene3D" id="2.60.40.10">
    <property type="entry name" value="Immunoglobulins"/>
    <property type="match status" value="1"/>
</dbReference>
<dbReference type="InterPro" id="IPR002110">
    <property type="entry name" value="Ankyrin_rpt"/>
</dbReference>
<dbReference type="InterPro" id="IPR036770">
    <property type="entry name" value="Ankyrin_rpt-contain_sf"/>
</dbReference>
<dbReference type="InterPro" id="IPR003961">
    <property type="entry name" value="FN3_dom"/>
</dbReference>
<dbReference type="InterPro" id="IPR036116">
    <property type="entry name" value="FN3_sf"/>
</dbReference>
<dbReference type="InterPro" id="IPR013783">
    <property type="entry name" value="Ig-like_fold"/>
</dbReference>
<dbReference type="PANTHER" id="PTHR24183">
    <property type="entry name" value="FIBRONECTIN TYPE 3 AND ANKYRIN REPEAT DOMAINS PROTEIN 1"/>
    <property type="match status" value="1"/>
</dbReference>
<dbReference type="PANTHER" id="PTHR24183:SF1">
    <property type="entry name" value="FIBRONECTIN TYPE 3 AND ANKYRIN REPEAT DOMAINS PROTEIN 1"/>
    <property type="match status" value="1"/>
</dbReference>
<dbReference type="Pfam" id="PF12796">
    <property type="entry name" value="Ank_2"/>
    <property type="match status" value="2"/>
</dbReference>
<dbReference type="PRINTS" id="PR01415">
    <property type="entry name" value="ANKYRIN"/>
</dbReference>
<dbReference type="SMART" id="SM00248">
    <property type="entry name" value="ANK"/>
    <property type="match status" value="6"/>
</dbReference>
<dbReference type="SMART" id="SM00060">
    <property type="entry name" value="FN3"/>
    <property type="match status" value="1"/>
</dbReference>
<dbReference type="SUPFAM" id="SSF48403">
    <property type="entry name" value="Ankyrin repeat"/>
    <property type="match status" value="1"/>
</dbReference>
<dbReference type="SUPFAM" id="SSF49265">
    <property type="entry name" value="Fibronectin type III"/>
    <property type="match status" value="1"/>
</dbReference>
<dbReference type="PROSITE" id="PS50297">
    <property type="entry name" value="ANK_REP_REGION"/>
    <property type="match status" value="1"/>
</dbReference>
<dbReference type="PROSITE" id="PS50088">
    <property type="entry name" value="ANK_REPEAT"/>
    <property type="match status" value="5"/>
</dbReference>
<dbReference type="PROSITE" id="PS50853">
    <property type="entry name" value="FN3"/>
    <property type="match status" value="1"/>
</dbReference>
<evidence type="ECO:0000250" key="1">
    <source>
        <dbReference type="UniProtKB" id="Q9DAM9"/>
    </source>
</evidence>
<evidence type="ECO:0000255" key="2">
    <source>
        <dbReference type="PROSITE-ProRule" id="PRU00316"/>
    </source>
</evidence>
<evidence type="ECO:0000269" key="3">
    <source>
    </source>
</evidence>
<evidence type="ECO:0000269" key="4">
    <source>
    </source>
</evidence>
<evidence type="ECO:0000269" key="5">
    <source>
    </source>
</evidence>
<evidence type="ECO:0000303" key="6">
    <source>
    </source>
</evidence>
<evidence type="ECO:0000303" key="7">
    <source ref="3"/>
</evidence>
<evidence type="ECO:0000305" key="8"/>
<evidence type="ECO:0000312" key="9">
    <source>
        <dbReference type="EMBL" id="AAP20060.1"/>
    </source>
</evidence>
<evidence type="ECO:0000312" key="10">
    <source>
        <dbReference type="EMBL" id="AAQ88521.1"/>
    </source>
</evidence>
<evidence type="ECO:0000312" key="11">
    <source>
        <dbReference type="HGNC" id="HGNC:23527"/>
    </source>
</evidence>
<name>FANK1_HUMAN</name>